<organism>
    <name type="scientific">Clostridium botulinum (strain Alaska E43 / Type E3)</name>
    <dbReference type="NCBI Taxonomy" id="508767"/>
    <lineage>
        <taxon>Bacteria</taxon>
        <taxon>Bacillati</taxon>
        <taxon>Bacillota</taxon>
        <taxon>Clostridia</taxon>
        <taxon>Eubacteriales</taxon>
        <taxon>Clostridiaceae</taxon>
        <taxon>Clostridium</taxon>
    </lineage>
</organism>
<evidence type="ECO:0000255" key="1">
    <source>
        <dbReference type="HAMAP-Rule" id="MF_01452"/>
    </source>
</evidence>
<sequence>MSIRFIYGRAGSGKSLFCINQIKKLIDSDKEKKIILLVPEQYTFTTENKVLNYIGERAFLNTHVLSFRTMCQKVFEECGGRVKQIIKDTGKHMLINKVLNEKIDDLSYFKKMSREQGFNNIISELITEFKKYNINIDALRDLTDKIDDNELVEKIRELSLIYEEFNVKMHSSYIDTDDELTLLAKKLLANNIYANSEIWIDEFTTFTPQQLEIIRILSKASVVNITLCMDKIENSDVEDITNVFSSIENTENRLLKLMEENNIGYLNPINLNSKLPYRFKNSEELSHIEKYCITYPFKSYKGKNKDVRLYKANNTYDEIEKVAKDIIRLVRDRNYRFRDISVVCRNIENYNKIISVIFNDYEIPFFMDQKIKLLNNPLIVLITSAFEVVLKNWSYESVFKYLKSGLTGFNIYDIDRLENFVLEHGIKSYKWNEEEIEKLKNIKIENGATEDELTIFNLMEEVRNSLISFHKLIEGKHYVRDICKALYEFLLSIKAFERIDEWIIKFEELKLEDKVKEYKQVESIVIDMLDQAVEVMGSDVVDTFEFFKILNSGFENEEIGVIPVALDQVNVGDIARIKGREVKALYIVGINDGILPAAHKDEGILSDRDRIELKEFGIVLAADGRSKAFEEQFVVYTALTIASEYLMLSYPMADFEGKSLRPSIIISRIKKILPNLVEESSLYDLSKRSDHFNKVISPIPTFNELIFALRRELEDEDIDEEYWGEVYNWFKENEDFKWKIENTFKGLRYSNTGEKVSRNKLLSLYKNDLGKLSFSVSRLEKYAECPFSYFIQYGLKAKNRKVYEFTPPDLGSFVHDILDSFTNKVKKEKIAWSDLDMIKCKNIVSELIDTKLKEDSGSILNSTNKYKYFSKRFKRVISKSVSVISEQMRRGEFEVFNNEFSFGSYNDGEAIVLELPSNEKVYLNGRIDRIDTLDLEGSTYLRIVDYKTGNKHFDLNQFYYGLQMQLLVYLDALIKNSEYILKKQALPGAVLYFKVDDPIIKTKGDITTEELEKEVLSNLKMNGLILKDAKVVKAMDRGIETDGYSLVIPAALKKDGDFKAGSEVVTEEQFTLLREYVNKKMIDLCEDMLCGDIKIQPTKDSDGSHCEFCDFSSICQFDSSIEDNKYKIIMKKSKDEIWNNIRDELNDDKKEN</sequence>
<feature type="chain" id="PRO_0000379169" description="ATP-dependent helicase/deoxyribonuclease subunit B">
    <location>
        <begin position="1"/>
        <end position="1152"/>
    </location>
</feature>
<feature type="domain" description="UvrD-like helicase ATP-binding" evidence="1">
    <location>
        <begin position="1"/>
        <end position="338"/>
    </location>
</feature>
<feature type="domain" description="UvrD-like helicase C-terminal" evidence="1">
    <location>
        <begin position="276"/>
        <end position="579"/>
    </location>
</feature>
<feature type="binding site" evidence="1">
    <location>
        <begin position="8"/>
        <end position="15"/>
    </location>
    <ligand>
        <name>ATP</name>
        <dbReference type="ChEBI" id="CHEBI:30616"/>
    </ligand>
</feature>
<feature type="binding site" evidence="1">
    <location>
        <position position="785"/>
    </location>
    <ligand>
        <name>[4Fe-4S] cluster</name>
        <dbReference type="ChEBI" id="CHEBI:49883"/>
    </ligand>
</feature>
<feature type="binding site" evidence="1">
    <location>
        <position position="1106"/>
    </location>
    <ligand>
        <name>[4Fe-4S] cluster</name>
        <dbReference type="ChEBI" id="CHEBI:49883"/>
    </ligand>
</feature>
<feature type="binding site" evidence="1">
    <location>
        <position position="1109"/>
    </location>
    <ligand>
        <name>[4Fe-4S] cluster</name>
        <dbReference type="ChEBI" id="CHEBI:49883"/>
    </ligand>
</feature>
<feature type="binding site" evidence="1">
    <location>
        <position position="1115"/>
    </location>
    <ligand>
        <name>[4Fe-4S] cluster</name>
        <dbReference type="ChEBI" id="CHEBI:49883"/>
    </ligand>
</feature>
<name>ADDB_CLOBA</name>
<reference key="1">
    <citation type="submission" date="2008-05" db="EMBL/GenBank/DDBJ databases">
        <title>Complete genome sequence of Clostridium botulinum E3 str. Alaska E43.</title>
        <authorList>
            <person name="Brinkac L.M."/>
            <person name="Brown J.L."/>
            <person name="Bruce D."/>
            <person name="Detter C."/>
            <person name="Munk C."/>
            <person name="Smith L.A."/>
            <person name="Smith T.J."/>
            <person name="Sutton G."/>
            <person name="Brettin T.S."/>
        </authorList>
    </citation>
    <scope>NUCLEOTIDE SEQUENCE [LARGE SCALE GENOMIC DNA]</scope>
    <source>
        <strain>Alaska E43 / Type E3</strain>
    </source>
</reference>
<proteinExistence type="inferred from homology"/>
<dbReference type="EC" id="3.1.-.-" evidence="1"/>
<dbReference type="EMBL" id="CP001078">
    <property type="protein sequence ID" value="ACD52231.1"/>
    <property type="molecule type" value="Genomic_DNA"/>
</dbReference>
<dbReference type="RefSeq" id="WP_012450421.1">
    <property type="nucleotide sequence ID" value="NC_010723.1"/>
</dbReference>
<dbReference type="SMR" id="B2UX56"/>
<dbReference type="KEGG" id="cbt:CLH_0024"/>
<dbReference type="HOGENOM" id="CLU_007838_0_0_9"/>
<dbReference type="GO" id="GO:0051539">
    <property type="term" value="F:4 iron, 4 sulfur cluster binding"/>
    <property type="evidence" value="ECO:0007669"/>
    <property type="project" value="UniProtKB-KW"/>
</dbReference>
<dbReference type="GO" id="GO:0008409">
    <property type="term" value="F:5'-3' exonuclease activity"/>
    <property type="evidence" value="ECO:0007669"/>
    <property type="project" value="UniProtKB-UniRule"/>
</dbReference>
<dbReference type="GO" id="GO:0005524">
    <property type="term" value="F:ATP binding"/>
    <property type="evidence" value="ECO:0007669"/>
    <property type="project" value="UniProtKB-UniRule"/>
</dbReference>
<dbReference type="GO" id="GO:0003690">
    <property type="term" value="F:double-stranded DNA binding"/>
    <property type="evidence" value="ECO:0007669"/>
    <property type="project" value="UniProtKB-UniRule"/>
</dbReference>
<dbReference type="GO" id="GO:0004386">
    <property type="term" value="F:helicase activity"/>
    <property type="evidence" value="ECO:0007669"/>
    <property type="project" value="UniProtKB-KW"/>
</dbReference>
<dbReference type="GO" id="GO:0046872">
    <property type="term" value="F:metal ion binding"/>
    <property type="evidence" value="ECO:0007669"/>
    <property type="project" value="UniProtKB-KW"/>
</dbReference>
<dbReference type="GO" id="GO:0000724">
    <property type="term" value="P:double-strand break repair via homologous recombination"/>
    <property type="evidence" value="ECO:0007669"/>
    <property type="project" value="UniProtKB-UniRule"/>
</dbReference>
<dbReference type="Gene3D" id="3.90.320.10">
    <property type="match status" value="1"/>
</dbReference>
<dbReference type="Gene3D" id="6.10.140.1030">
    <property type="match status" value="1"/>
</dbReference>
<dbReference type="Gene3D" id="3.40.50.300">
    <property type="entry name" value="P-loop containing nucleotide triphosphate hydrolases"/>
    <property type="match status" value="3"/>
</dbReference>
<dbReference type="HAMAP" id="MF_01452">
    <property type="entry name" value="AddB_type1"/>
    <property type="match status" value="1"/>
</dbReference>
<dbReference type="InterPro" id="IPR049035">
    <property type="entry name" value="ADDB_N"/>
</dbReference>
<dbReference type="InterPro" id="IPR014140">
    <property type="entry name" value="DNA_helicase_suAddB"/>
</dbReference>
<dbReference type="InterPro" id="IPR014017">
    <property type="entry name" value="DNA_helicase_UvrD-like_C"/>
</dbReference>
<dbReference type="InterPro" id="IPR027417">
    <property type="entry name" value="P-loop_NTPase"/>
</dbReference>
<dbReference type="InterPro" id="IPR011604">
    <property type="entry name" value="PDDEXK-like_dom_sf"/>
</dbReference>
<dbReference type="InterPro" id="IPR038726">
    <property type="entry name" value="PDDEXK_AddAB-type"/>
</dbReference>
<dbReference type="NCBIfam" id="TIGR02773">
    <property type="entry name" value="addB_Gpos"/>
    <property type="match status" value="1"/>
</dbReference>
<dbReference type="PANTHER" id="PTHR30591">
    <property type="entry name" value="RECBCD ENZYME SUBUNIT RECC"/>
    <property type="match status" value="1"/>
</dbReference>
<dbReference type="PANTHER" id="PTHR30591:SF1">
    <property type="entry name" value="RECBCD ENZYME SUBUNIT RECC"/>
    <property type="match status" value="1"/>
</dbReference>
<dbReference type="Pfam" id="PF21445">
    <property type="entry name" value="ADDB_N"/>
    <property type="match status" value="1"/>
</dbReference>
<dbReference type="Pfam" id="PF12705">
    <property type="entry name" value="PDDEXK_1"/>
    <property type="match status" value="1"/>
</dbReference>
<dbReference type="SUPFAM" id="SSF52540">
    <property type="entry name" value="P-loop containing nucleoside triphosphate hydrolases"/>
    <property type="match status" value="2"/>
</dbReference>
<dbReference type="PROSITE" id="PS51198">
    <property type="entry name" value="UVRD_HELICASE_ATP_BIND"/>
    <property type="match status" value="1"/>
</dbReference>
<dbReference type="PROSITE" id="PS51217">
    <property type="entry name" value="UVRD_HELICASE_CTER"/>
    <property type="match status" value="1"/>
</dbReference>
<keyword id="KW-0004">4Fe-4S</keyword>
<keyword id="KW-0067">ATP-binding</keyword>
<keyword id="KW-0227">DNA damage</keyword>
<keyword id="KW-0234">DNA repair</keyword>
<keyword id="KW-0238">DNA-binding</keyword>
<keyword id="KW-0269">Exonuclease</keyword>
<keyword id="KW-0347">Helicase</keyword>
<keyword id="KW-0378">Hydrolase</keyword>
<keyword id="KW-0408">Iron</keyword>
<keyword id="KW-0411">Iron-sulfur</keyword>
<keyword id="KW-0479">Metal-binding</keyword>
<keyword id="KW-0540">Nuclease</keyword>
<keyword id="KW-0547">Nucleotide-binding</keyword>
<gene>
    <name evidence="1" type="primary">addB</name>
    <name type="ordered locus">CLH_0024</name>
</gene>
<protein>
    <recommendedName>
        <fullName evidence="1">ATP-dependent helicase/deoxyribonuclease subunit B</fullName>
        <ecNumber evidence="1">3.1.-.-</ecNumber>
    </recommendedName>
    <alternativeName>
        <fullName evidence="1">ATP-dependent helicase/nuclease subunit AddB</fullName>
    </alternativeName>
</protein>
<comment type="function">
    <text evidence="1">The heterodimer acts as both an ATP-dependent DNA helicase and an ATP-dependent, dual-direction single-stranded exonuclease. Recognizes the chi site generating a DNA molecule suitable for the initiation of homologous recombination. The AddB subunit has 5' -&gt; 3' nuclease activity but not helicase activity.</text>
</comment>
<comment type="cofactor">
    <cofactor evidence="1">
        <name>Mg(2+)</name>
        <dbReference type="ChEBI" id="CHEBI:18420"/>
    </cofactor>
</comment>
<comment type="cofactor">
    <cofactor evidence="1">
        <name>[4Fe-4S] cluster</name>
        <dbReference type="ChEBI" id="CHEBI:49883"/>
    </cofactor>
    <text evidence="1">Binds 1 [4Fe-4S] cluster.</text>
</comment>
<comment type="subunit">
    <text evidence="1">Heterodimer of AddA and AddB.</text>
</comment>
<comment type="miscellaneous">
    <text evidence="1">Despite having conserved helicase domains, this subunit does not have helicase activity.</text>
</comment>
<comment type="similarity">
    <text evidence="1">Belongs to the helicase family. AddB/RexB type 1 subfamily.</text>
</comment>
<accession>B2UX56</accession>